<reference key="1">
    <citation type="journal article" date="2007" name="Proc. Natl. Acad. Sci. U.S.A.">
        <title>Genome sequencing reveals complex secondary metabolome in the marine actinomycete Salinispora tropica.</title>
        <authorList>
            <person name="Udwary D.W."/>
            <person name="Zeigler L."/>
            <person name="Asolkar R.N."/>
            <person name="Singan V."/>
            <person name="Lapidus A."/>
            <person name="Fenical W."/>
            <person name="Jensen P.R."/>
            <person name="Moore B.S."/>
        </authorList>
    </citation>
    <scope>NUCLEOTIDE SEQUENCE [LARGE SCALE GENOMIC DNA]</scope>
    <source>
        <strain>ATCC BAA-916 / DSM 44818 / JCM 13857 / NBRC 105044 / CNB-440</strain>
    </source>
</reference>
<proteinExistence type="inferred from homology"/>
<dbReference type="EC" id="6.1.1.9" evidence="1"/>
<dbReference type="EMBL" id="CP000667">
    <property type="protein sequence ID" value="ABP52500.1"/>
    <property type="molecule type" value="Genomic_DNA"/>
</dbReference>
<dbReference type="RefSeq" id="WP_011903937.1">
    <property type="nucleotide sequence ID" value="NC_009380.1"/>
</dbReference>
<dbReference type="SMR" id="A4X0V0"/>
<dbReference type="STRING" id="369723.Strop_0015"/>
<dbReference type="KEGG" id="stp:Strop_0015"/>
<dbReference type="PATRIC" id="fig|369723.5.peg.15"/>
<dbReference type="eggNOG" id="COG0525">
    <property type="taxonomic scope" value="Bacteria"/>
</dbReference>
<dbReference type="HOGENOM" id="CLU_001493_0_2_11"/>
<dbReference type="Proteomes" id="UP000000235">
    <property type="component" value="Chromosome"/>
</dbReference>
<dbReference type="GO" id="GO:0005829">
    <property type="term" value="C:cytosol"/>
    <property type="evidence" value="ECO:0007669"/>
    <property type="project" value="TreeGrafter"/>
</dbReference>
<dbReference type="GO" id="GO:0002161">
    <property type="term" value="F:aminoacyl-tRNA deacylase activity"/>
    <property type="evidence" value="ECO:0007669"/>
    <property type="project" value="InterPro"/>
</dbReference>
<dbReference type="GO" id="GO:0005524">
    <property type="term" value="F:ATP binding"/>
    <property type="evidence" value="ECO:0007669"/>
    <property type="project" value="UniProtKB-UniRule"/>
</dbReference>
<dbReference type="GO" id="GO:0004832">
    <property type="term" value="F:valine-tRNA ligase activity"/>
    <property type="evidence" value="ECO:0007669"/>
    <property type="project" value="UniProtKB-UniRule"/>
</dbReference>
<dbReference type="GO" id="GO:0006438">
    <property type="term" value="P:valyl-tRNA aminoacylation"/>
    <property type="evidence" value="ECO:0007669"/>
    <property type="project" value="UniProtKB-UniRule"/>
</dbReference>
<dbReference type="CDD" id="cd07962">
    <property type="entry name" value="Anticodon_Ia_Val"/>
    <property type="match status" value="1"/>
</dbReference>
<dbReference type="Gene3D" id="3.40.50.620">
    <property type="entry name" value="HUPs"/>
    <property type="match status" value="2"/>
</dbReference>
<dbReference type="Gene3D" id="1.10.730.10">
    <property type="entry name" value="Isoleucyl-tRNA Synthetase, Domain 1"/>
    <property type="match status" value="1"/>
</dbReference>
<dbReference type="Gene3D" id="3.90.740.10">
    <property type="entry name" value="Valyl/Leucyl/Isoleucyl-tRNA synthetase, editing domain"/>
    <property type="match status" value="1"/>
</dbReference>
<dbReference type="HAMAP" id="MF_02005">
    <property type="entry name" value="Val_tRNA_synth_type2"/>
    <property type="match status" value="1"/>
</dbReference>
<dbReference type="InterPro" id="IPR001412">
    <property type="entry name" value="aa-tRNA-synth_I_CS"/>
</dbReference>
<dbReference type="InterPro" id="IPR002300">
    <property type="entry name" value="aa-tRNA-synth_Ia"/>
</dbReference>
<dbReference type="InterPro" id="IPR033705">
    <property type="entry name" value="Anticodon_Ia_Val"/>
</dbReference>
<dbReference type="InterPro" id="IPR013155">
    <property type="entry name" value="M/V/L/I-tRNA-synth_anticd-bd"/>
</dbReference>
<dbReference type="InterPro" id="IPR014729">
    <property type="entry name" value="Rossmann-like_a/b/a_fold"/>
</dbReference>
<dbReference type="InterPro" id="IPR009080">
    <property type="entry name" value="tRNAsynth_Ia_anticodon-bd"/>
</dbReference>
<dbReference type="InterPro" id="IPR009008">
    <property type="entry name" value="Val/Leu/Ile-tRNA-synth_edit"/>
</dbReference>
<dbReference type="InterPro" id="IPR022874">
    <property type="entry name" value="Valine-tRNA_ligase_type_2"/>
</dbReference>
<dbReference type="InterPro" id="IPR002303">
    <property type="entry name" value="Valyl-tRNA_ligase"/>
</dbReference>
<dbReference type="InterPro" id="IPR048044">
    <property type="entry name" value="Valyl-tRNA_ligase_actino"/>
</dbReference>
<dbReference type="NCBIfam" id="NF000540">
    <property type="entry name" value="alt_ValS"/>
    <property type="match status" value="1"/>
</dbReference>
<dbReference type="NCBIfam" id="NF009687">
    <property type="entry name" value="PRK13208.1"/>
    <property type="match status" value="1"/>
</dbReference>
<dbReference type="PANTHER" id="PTHR11946:SF93">
    <property type="entry name" value="VALINE--TRNA LIGASE, CHLOROPLASTIC_MITOCHONDRIAL 2"/>
    <property type="match status" value="1"/>
</dbReference>
<dbReference type="PANTHER" id="PTHR11946">
    <property type="entry name" value="VALYL-TRNA SYNTHETASES"/>
    <property type="match status" value="1"/>
</dbReference>
<dbReference type="Pfam" id="PF08264">
    <property type="entry name" value="Anticodon_1"/>
    <property type="match status" value="1"/>
</dbReference>
<dbReference type="Pfam" id="PF00133">
    <property type="entry name" value="tRNA-synt_1"/>
    <property type="match status" value="1"/>
</dbReference>
<dbReference type="PRINTS" id="PR00986">
    <property type="entry name" value="TRNASYNTHVAL"/>
</dbReference>
<dbReference type="SUPFAM" id="SSF47323">
    <property type="entry name" value="Anticodon-binding domain of a subclass of class I aminoacyl-tRNA synthetases"/>
    <property type="match status" value="1"/>
</dbReference>
<dbReference type="SUPFAM" id="SSF52374">
    <property type="entry name" value="Nucleotidylyl transferase"/>
    <property type="match status" value="1"/>
</dbReference>
<dbReference type="SUPFAM" id="SSF50677">
    <property type="entry name" value="ValRS/IleRS/LeuRS editing domain"/>
    <property type="match status" value="1"/>
</dbReference>
<dbReference type="PROSITE" id="PS00178">
    <property type="entry name" value="AA_TRNA_LIGASE_I"/>
    <property type="match status" value="1"/>
</dbReference>
<accession>A4X0V0</accession>
<name>SYV_SALTO</name>
<keyword id="KW-0030">Aminoacyl-tRNA synthetase</keyword>
<keyword id="KW-0067">ATP-binding</keyword>
<keyword id="KW-0963">Cytoplasm</keyword>
<keyword id="KW-0436">Ligase</keyword>
<keyword id="KW-0547">Nucleotide-binding</keyword>
<keyword id="KW-0648">Protein biosynthesis</keyword>
<keyword id="KW-1185">Reference proteome</keyword>
<evidence type="ECO:0000255" key="1">
    <source>
        <dbReference type="HAMAP-Rule" id="MF_02005"/>
    </source>
</evidence>
<evidence type="ECO:0000256" key="2">
    <source>
        <dbReference type="SAM" id="MobiDB-lite"/>
    </source>
</evidence>
<organism>
    <name type="scientific">Salinispora tropica (strain ATCC BAA-916 / DSM 44818 / JCM 13857 / NBRC 105044 / CNB-440)</name>
    <dbReference type="NCBI Taxonomy" id="369723"/>
    <lineage>
        <taxon>Bacteria</taxon>
        <taxon>Bacillati</taxon>
        <taxon>Actinomycetota</taxon>
        <taxon>Actinomycetes</taxon>
        <taxon>Micromonosporales</taxon>
        <taxon>Micromonosporaceae</taxon>
        <taxon>Salinispora</taxon>
    </lineage>
</organism>
<protein>
    <recommendedName>
        <fullName evidence="1">Valine--tRNA ligase</fullName>
        <ecNumber evidence="1">6.1.1.9</ecNumber>
    </recommendedName>
    <alternativeName>
        <fullName evidence="1">Valyl-tRNA synthetase</fullName>
        <shortName evidence="1">ValRS</shortName>
    </alternativeName>
</protein>
<sequence length="860" mass="95775">MPAKASLEGIEKVWSRVWEQNGTYRFDRSVTRSEVYSVDTPPPTVSGALHVGHVFSYTHSDAIARFQRMRGRAVFYPMGWDDNGLPTERRVQNYYGVRCDPSLPYDPGYTPPAEPPSRPQPISRRNFVELCRNLTELDEQAFEALWRHLGLSVDWSLTYATIDDRSRAISQRAFLRNLARGEAYLADAPTLWDVTFRTAVAQAELEDRERQGTYYRLAFHSATGDKIYVETTRPELLPACVALVAHPDDERYQHLLGSTAVSPLFGVPVPIRAHPLAQPDKGSGIAMICTFGDLTDVLWWRELALPTRPVMGRDGRLLPEPPPGIVNADAVAAYQTLAGLTAFSAKAKVVELLRAAGDLEIAPRPTTQTVKFYEKGDKPLEIITTRQWYVRNGGRDTELRSALVHRGRELTWSPEFMRSRYENWVEGLSGDWVISRQRFFGVPIPVWYPLDDSGEPDYAHPILPDDVALPVDPSSDAPTGYQESQRNQPGGFMADPDVMDTWATSSLTPEIAGGWTVDDDLFARVFPMDLRPQAHEIIRTWLFATVLRSHQEFNCLPWTTVLLSGWILDPDRKKMSKSKGNTVTPMALLEKYGSDAVRYWAVSGRPGTDTAFDTGQMKIGRRLAIKILNATTFVLRFGSPTLLAPHMAHVTEPLDRSMLARLASVVDSATTGFTQHDYTRSLECTEQFFWSFCDDYLELVKERAYGEPDDRAVRSAHAALALALHTLLRLFAPMLPFVTEEAWSWWQEGSVHRAAWPTGQELVGPDVSAEANRSTEASGSGEAGTDLLGLASDVLAAIRRAKSEAKQSMRAPVAQLTLRGRASDLAAFALVSRDVRAAGVVREVDTAEADTPLTPEITLG</sequence>
<comment type="function">
    <text evidence="1">Catalyzes the attachment of valine to tRNA(Val). As ValRS can inadvertently accommodate and process structurally similar amino acids such as threonine, to avoid such errors, it has a 'posttransfer' editing activity that hydrolyzes mischarged Thr-tRNA(Val) in a tRNA-dependent manner.</text>
</comment>
<comment type="catalytic activity">
    <reaction evidence="1">
        <text>tRNA(Val) + L-valine + ATP = L-valyl-tRNA(Val) + AMP + diphosphate</text>
        <dbReference type="Rhea" id="RHEA:10704"/>
        <dbReference type="Rhea" id="RHEA-COMP:9672"/>
        <dbReference type="Rhea" id="RHEA-COMP:9708"/>
        <dbReference type="ChEBI" id="CHEBI:30616"/>
        <dbReference type="ChEBI" id="CHEBI:33019"/>
        <dbReference type="ChEBI" id="CHEBI:57762"/>
        <dbReference type="ChEBI" id="CHEBI:78442"/>
        <dbReference type="ChEBI" id="CHEBI:78537"/>
        <dbReference type="ChEBI" id="CHEBI:456215"/>
        <dbReference type="EC" id="6.1.1.9"/>
    </reaction>
</comment>
<comment type="subunit">
    <text evidence="1">Monomer.</text>
</comment>
<comment type="subcellular location">
    <subcellularLocation>
        <location evidence="1">Cytoplasm</location>
    </subcellularLocation>
</comment>
<comment type="domain">
    <text evidence="1">ValRS has two distinct active sites: one for aminoacylation and one for editing. The misactivated threonine is translocated from the active site to the editing site.</text>
</comment>
<comment type="similarity">
    <text evidence="1">Belongs to the class-I aminoacyl-tRNA synthetase family. ValS type 2 subfamily.</text>
</comment>
<feature type="chain" id="PRO_1000088571" description="Valine--tRNA ligase">
    <location>
        <begin position="1"/>
        <end position="860"/>
    </location>
</feature>
<feature type="region of interest" description="Disordered" evidence="2">
    <location>
        <begin position="469"/>
        <end position="491"/>
    </location>
</feature>
<feature type="short sequence motif" description="'HIGH' region">
    <location>
        <begin position="43"/>
        <end position="53"/>
    </location>
</feature>
<feature type="short sequence motif" description="'KMSKS' region">
    <location>
        <begin position="574"/>
        <end position="578"/>
    </location>
</feature>
<feature type="binding site" evidence="1">
    <location>
        <position position="577"/>
    </location>
    <ligand>
        <name>ATP</name>
        <dbReference type="ChEBI" id="CHEBI:30616"/>
    </ligand>
</feature>
<gene>
    <name evidence="1" type="primary">valS</name>
    <name type="ordered locus">Strop_0015</name>
</gene>